<dbReference type="EMBL" id="U17244">
    <property type="status" value="NOT_ANNOTATED_CDS"/>
    <property type="molecule type" value="Genomic_DNA"/>
</dbReference>
<dbReference type="EMBL" id="BK006945">
    <property type="protein sequence ID" value="DAA09575.1"/>
    <property type="molecule type" value="Genomic_DNA"/>
</dbReference>
<dbReference type="RefSeq" id="NP_013364.1">
    <property type="nucleotide sequence ID" value="NM_001184339.1"/>
</dbReference>
<dbReference type="BioGRID" id="31530">
    <property type="interactions" value="54"/>
</dbReference>
<dbReference type="FunCoup" id="Q3E764">
    <property type="interactions" value="713"/>
</dbReference>
<dbReference type="IntAct" id="Q3E764">
    <property type="interactions" value="3"/>
</dbReference>
<dbReference type="MINT" id="Q3E764"/>
<dbReference type="STRING" id="4932.YLR262C-A"/>
<dbReference type="iPTMnet" id="Q3E764"/>
<dbReference type="PaxDb" id="4932-YLR262C-A"/>
<dbReference type="PeptideAtlas" id="Q3E764"/>
<dbReference type="TopDownProteomics" id="Q3E764"/>
<dbReference type="EnsemblFungi" id="YLR262C-A_mRNA">
    <property type="protein sequence ID" value="YLR262C-A"/>
    <property type="gene ID" value="YLR262C-A"/>
</dbReference>
<dbReference type="GeneID" id="850967"/>
<dbReference type="KEGG" id="sce:YLR262C-A"/>
<dbReference type="AGR" id="SGD:S000007246"/>
<dbReference type="SGD" id="S000007246">
    <property type="gene designation" value="TMA7"/>
</dbReference>
<dbReference type="VEuPathDB" id="FungiDB:YLR262C-A"/>
<dbReference type="eggNOG" id="KOG4766">
    <property type="taxonomic scope" value="Eukaryota"/>
</dbReference>
<dbReference type="HOGENOM" id="CLU_184661_2_0_1"/>
<dbReference type="InParanoid" id="Q3E764"/>
<dbReference type="OMA" id="KKGPMNT"/>
<dbReference type="BioCyc" id="YEAST:G3O-32560-MONOMER"/>
<dbReference type="BioGRID-ORCS" id="850967">
    <property type="hits" value="4 hits in 10 CRISPR screens"/>
</dbReference>
<dbReference type="PRO" id="PR:Q3E764"/>
<dbReference type="Proteomes" id="UP000002311">
    <property type="component" value="Chromosome XII"/>
</dbReference>
<dbReference type="RNAct" id="Q3E764">
    <property type="molecule type" value="protein"/>
</dbReference>
<dbReference type="GO" id="GO:0005737">
    <property type="term" value="C:cytoplasm"/>
    <property type="evidence" value="ECO:0007005"/>
    <property type="project" value="SGD"/>
</dbReference>
<dbReference type="GO" id="GO:0005634">
    <property type="term" value="C:nucleus"/>
    <property type="evidence" value="ECO:0007005"/>
    <property type="project" value="SGD"/>
</dbReference>
<dbReference type="GO" id="GO:0002181">
    <property type="term" value="P:cytoplasmic translation"/>
    <property type="evidence" value="ECO:0000315"/>
    <property type="project" value="SGD"/>
</dbReference>
<dbReference type="InterPro" id="IPR015157">
    <property type="entry name" value="TMA7"/>
</dbReference>
<dbReference type="PANTHER" id="PTHR28632">
    <property type="entry name" value="TRANSLATION MACHINERY-ASSOCIATED PROTEIN 7"/>
    <property type="match status" value="1"/>
</dbReference>
<dbReference type="Pfam" id="PF09072">
    <property type="entry name" value="TMA7"/>
    <property type="match status" value="1"/>
</dbReference>
<keyword id="KW-0963">Cytoplasm</keyword>
<keyword id="KW-0539">Nucleus</keyword>
<keyword id="KW-0648">Protein biosynthesis</keyword>
<keyword id="KW-1185">Reference proteome</keyword>
<accession>Q3E764</accession>
<accession>D6VYQ9</accession>
<evidence type="ECO:0000256" key="1">
    <source>
        <dbReference type="SAM" id="MobiDB-lite"/>
    </source>
</evidence>
<evidence type="ECO:0000269" key="2">
    <source>
    </source>
</evidence>
<evidence type="ECO:0000269" key="3">
    <source>
    </source>
</evidence>
<evidence type="ECO:0000269" key="4">
    <source>
    </source>
</evidence>
<evidence type="ECO:0000305" key="5"/>
<gene>
    <name type="primary">TMA7</name>
    <name type="ordered locus">YLR262C-A</name>
</gene>
<feature type="chain" id="PRO_0000247142" description="Translation machinery-associated protein 7">
    <location>
        <begin position="1"/>
        <end position="64"/>
    </location>
</feature>
<feature type="region of interest" description="Disordered" evidence="1">
    <location>
        <begin position="1"/>
        <end position="38"/>
    </location>
</feature>
<feature type="region of interest" description="Disordered" evidence="1">
    <location>
        <begin position="45"/>
        <end position="64"/>
    </location>
</feature>
<feature type="compositionally biased region" description="Basic and acidic residues" evidence="1">
    <location>
        <begin position="27"/>
        <end position="38"/>
    </location>
</feature>
<feature type="compositionally biased region" description="Gly residues" evidence="1">
    <location>
        <begin position="53"/>
        <end position="64"/>
    </location>
</feature>
<reference key="1">
    <citation type="journal article" date="1997" name="Nature">
        <title>The nucleotide sequence of Saccharomyces cerevisiae chromosome XII.</title>
        <authorList>
            <person name="Johnston M."/>
            <person name="Hillier L.W."/>
            <person name="Riles L."/>
            <person name="Albermann K."/>
            <person name="Andre B."/>
            <person name="Ansorge W."/>
            <person name="Benes V."/>
            <person name="Brueckner M."/>
            <person name="Delius H."/>
            <person name="Dubois E."/>
            <person name="Duesterhoeft A."/>
            <person name="Entian K.-D."/>
            <person name="Floeth M."/>
            <person name="Goffeau A."/>
            <person name="Hebling U."/>
            <person name="Heumann K."/>
            <person name="Heuss-Neitzel D."/>
            <person name="Hilbert H."/>
            <person name="Hilger F."/>
            <person name="Kleine K."/>
            <person name="Koetter P."/>
            <person name="Louis E.J."/>
            <person name="Messenguy F."/>
            <person name="Mewes H.-W."/>
            <person name="Miosga T."/>
            <person name="Moestl D."/>
            <person name="Mueller-Auer S."/>
            <person name="Nentwich U."/>
            <person name="Obermaier B."/>
            <person name="Piravandi E."/>
            <person name="Pohl T.M."/>
            <person name="Portetelle D."/>
            <person name="Purnelle B."/>
            <person name="Rechmann S."/>
            <person name="Rieger M."/>
            <person name="Rinke M."/>
            <person name="Rose M."/>
            <person name="Scharfe M."/>
            <person name="Scherens B."/>
            <person name="Scholler P."/>
            <person name="Schwager C."/>
            <person name="Schwarz S."/>
            <person name="Underwood A.P."/>
            <person name="Urrestarazu L.A."/>
            <person name="Vandenbol M."/>
            <person name="Verhasselt P."/>
            <person name="Vierendeels F."/>
            <person name="Voet M."/>
            <person name="Volckaert G."/>
            <person name="Voss H."/>
            <person name="Wambutt R."/>
            <person name="Wedler E."/>
            <person name="Wedler H."/>
            <person name="Zimmermann F.K."/>
            <person name="Zollner A."/>
            <person name="Hani J."/>
            <person name="Hoheisel J.D."/>
        </authorList>
    </citation>
    <scope>NUCLEOTIDE SEQUENCE [LARGE SCALE GENOMIC DNA]</scope>
    <source>
        <strain>ATCC 204508 / S288c</strain>
    </source>
</reference>
<reference key="2">
    <citation type="journal article" date="2014" name="G3 (Bethesda)">
        <title>The reference genome sequence of Saccharomyces cerevisiae: Then and now.</title>
        <authorList>
            <person name="Engel S.R."/>
            <person name="Dietrich F.S."/>
            <person name="Fisk D.G."/>
            <person name="Binkley G."/>
            <person name="Balakrishnan R."/>
            <person name="Costanzo M.C."/>
            <person name="Dwight S.S."/>
            <person name="Hitz B.C."/>
            <person name="Karra K."/>
            <person name="Nash R.S."/>
            <person name="Weng S."/>
            <person name="Wong E.D."/>
            <person name="Lloyd P."/>
            <person name="Skrzypek M.S."/>
            <person name="Miyasato S.R."/>
            <person name="Simison M."/>
            <person name="Cherry J.M."/>
        </authorList>
    </citation>
    <scope>GENOME REANNOTATION</scope>
    <source>
        <strain>ATCC 204508 / S288c</strain>
    </source>
</reference>
<reference key="3">
    <citation type="journal article" date="2007" name="Genome Res.">
        <title>Approaching a complete repository of sequence-verified protein-encoding clones for Saccharomyces cerevisiae.</title>
        <authorList>
            <person name="Hu Y."/>
            <person name="Rolfs A."/>
            <person name="Bhullar B."/>
            <person name="Murthy T.V.S."/>
            <person name="Zhu C."/>
            <person name="Berger M.F."/>
            <person name="Camargo A.A."/>
            <person name="Kelley F."/>
            <person name="McCarron S."/>
            <person name="Jepson D."/>
            <person name="Richardson A."/>
            <person name="Raphael J."/>
            <person name="Moreira D."/>
            <person name="Taycher E."/>
            <person name="Zuo D."/>
            <person name="Mohr S."/>
            <person name="Kane M.F."/>
            <person name="Williamson J."/>
            <person name="Simpson A.J.G."/>
            <person name="Bulyk M.L."/>
            <person name="Harlow E."/>
            <person name="Marsischky G."/>
            <person name="Kolodner R.D."/>
            <person name="LaBaer J."/>
        </authorList>
    </citation>
    <scope>NUCLEOTIDE SEQUENCE [GENOMIC DNA]</scope>
    <source>
        <strain>ATCC 204508 / S288c</strain>
    </source>
</reference>
<reference key="4">
    <citation type="journal article" date="2003" name="Nature">
        <title>Global analysis of protein localization in budding yeast.</title>
        <authorList>
            <person name="Huh W.-K."/>
            <person name="Falvo J.V."/>
            <person name="Gerke L.C."/>
            <person name="Carroll A.S."/>
            <person name="Howson R.W."/>
            <person name="Weissman J.S."/>
            <person name="O'Shea E.K."/>
        </authorList>
    </citation>
    <scope>SUBCELLULAR LOCATION [LARGE SCALE ANALYSIS]</scope>
</reference>
<reference key="5">
    <citation type="journal article" date="2003" name="Nature">
        <title>Global analysis of protein expression in yeast.</title>
        <authorList>
            <person name="Ghaemmaghami S."/>
            <person name="Huh W.-K."/>
            <person name="Bower K."/>
            <person name="Howson R.W."/>
            <person name="Belle A."/>
            <person name="Dephoure N."/>
            <person name="O'Shea E.K."/>
            <person name="Weissman J.S."/>
        </authorList>
    </citation>
    <scope>LEVEL OF PROTEIN EXPRESSION [LARGE SCALE ANALYSIS]</scope>
</reference>
<reference key="6">
    <citation type="journal article" date="2006" name="Genes Dev.">
        <title>Systematic identification and functional screens of uncharacterized proteins associated with eukaryotic ribosomal complexes.</title>
        <authorList>
            <person name="Fleischer T.C."/>
            <person name="Weaver C.M."/>
            <person name="McAfee K.J."/>
            <person name="Jennings J.L."/>
            <person name="Link A.J."/>
        </authorList>
    </citation>
    <scope>FUNCTION</scope>
    <scope>IDENTIFICATION BY MASS SPECTROMETRY</scope>
    <scope>SUBUNIT</scope>
</reference>
<name>TMA7_YEAST</name>
<proteinExistence type="evidence at protein level"/>
<comment type="function">
    <text evidence="4">Involved in protein synthesis.</text>
</comment>
<comment type="subunit">
    <text evidence="4">Interacts with the 40S ribosomal subunit.</text>
</comment>
<comment type="subcellular location">
    <subcellularLocation>
        <location evidence="2">Cytoplasm</location>
    </subcellularLocation>
    <subcellularLocation>
        <location evidence="2">Nucleus</location>
    </subcellularLocation>
</comment>
<comment type="miscellaneous">
    <text evidence="3">Present with 3100 molecules/cell in log phase SD medium.</text>
</comment>
<comment type="similarity">
    <text evidence="5">Belongs to the TMA7 family.</text>
</comment>
<organism>
    <name type="scientific">Saccharomyces cerevisiae (strain ATCC 204508 / S288c)</name>
    <name type="common">Baker's yeast</name>
    <dbReference type="NCBI Taxonomy" id="559292"/>
    <lineage>
        <taxon>Eukaryota</taxon>
        <taxon>Fungi</taxon>
        <taxon>Dikarya</taxon>
        <taxon>Ascomycota</taxon>
        <taxon>Saccharomycotina</taxon>
        <taxon>Saccharomycetes</taxon>
        <taxon>Saccharomycetales</taxon>
        <taxon>Saccharomycetaceae</taxon>
        <taxon>Saccharomyces</taxon>
    </lineage>
</organism>
<protein>
    <recommendedName>
        <fullName>Translation machinery-associated protein 7</fullName>
    </recommendedName>
</protein>
<sequence>MSSRQGGKMKPLKQKKKQQQDLDPEDIAFKEKQKADAAAKKALMANMKSGKPLVGGGIKKSGKK</sequence>